<dbReference type="EMBL" id="CP000127">
    <property type="protein sequence ID" value="ABA58116.1"/>
    <property type="molecule type" value="Genomic_DNA"/>
</dbReference>
<dbReference type="RefSeq" id="WP_002809054.1">
    <property type="nucleotide sequence ID" value="NC_007484.1"/>
</dbReference>
<dbReference type="SMR" id="Q3JAN0"/>
<dbReference type="FunCoup" id="Q3JAN0">
    <property type="interactions" value="229"/>
</dbReference>
<dbReference type="STRING" id="323261.Noc_1644"/>
<dbReference type="KEGG" id="noc:Noc_1644"/>
<dbReference type="eggNOG" id="COG0322">
    <property type="taxonomic scope" value="Bacteria"/>
</dbReference>
<dbReference type="HOGENOM" id="CLU_014841_3_0_6"/>
<dbReference type="InParanoid" id="Q3JAN0"/>
<dbReference type="Proteomes" id="UP000006838">
    <property type="component" value="Chromosome"/>
</dbReference>
<dbReference type="GO" id="GO:0005737">
    <property type="term" value="C:cytoplasm"/>
    <property type="evidence" value="ECO:0007669"/>
    <property type="project" value="UniProtKB-SubCell"/>
</dbReference>
<dbReference type="GO" id="GO:0009380">
    <property type="term" value="C:excinuclease repair complex"/>
    <property type="evidence" value="ECO:0007669"/>
    <property type="project" value="InterPro"/>
</dbReference>
<dbReference type="GO" id="GO:0003677">
    <property type="term" value="F:DNA binding"/>
    <property type="evidence" value="ECO:0007669"/>
    <property type="project" value="UniProtKB-UniRule"/>
</dbReference>
<dbReference type="GO" id="GO:0009381">
    <property type="term" value="F:excinuclease ABC activity"/>
    <property type="evidence" value="ECO:0007669"/>
    <property type="project" value="UniProtKB-UniRule"/>
</dbReference>
<dbReference type="GO" id="GO:0006289">
    <property type="term" value="P:nucleotide-excision repair"/>
    <property type="evidence" value="ECO:0007669"/>
    <property type="project" value="UniProtKB-UniRule"/>
</dbReference>
<dbReference type="GO" id="GO:0009432">
    <property type="term" value="P:SOS response"/>
    <property type="evidence" value="ECO:0007669"/>
    <property type="project" value="UniProtKB-UniRule"/>
</dbReference>
<dbReference type="CDD" id="cd10434">
    <property type="entry name" value="GIY-YIG_UvrC_Cho"/>
    <property type="match status" value="1"/>
</dbReference>
<dbReference type="FunFam" id="3.30.420.340:FF:000001">
    <property type="entry name" value="UvrABC system protein C"/>
    <property type="match status" value="1"/>
</dbReference>
<dbReference type="FunFam" id="3.40.1440.10:FF:000001">
    <property type="entry name" value="UvrABC system protein C"/>
    <property type="match status" value="1"/>
</dbReference>
<dbReference type="Gene3D" id="1.10.150.20">
    <property type="entry name" value="5' to 3' exonuclease, C-terminal subdomain"/>
    <property type="match status" value="1"/>
</dbReference>
<dbReference type="Gene3D" id="3.40.1440.10">
    <property type="entry name" value="GIY-YIG endonuclease"/>
    <property type="match status" value="1"/>
</dbReference>
<dbReference type="Gene3D" id="4.10.860.10">
    <property type="entry name" value="UVR domain"/>
    <property type="match status" value="1"/>
</dbReference>
<dbReference type="Gene3D" id="3.30.420.340">
    <property type="entry name" value="UvrC, RNAse H endonuclease domain"/>
    <property type="match status" value="1"/>
</dbReference>
<dbReference type="HAMAP" id="MF_00203">
    <property type="entry name" value="UvrC"/>
    <property type="match status" value="1"/>
</dbReference>
<dbReference type="InterPro" id="IPR000305">
    <property type="entry name" value="GIY-YIG_endonuc"/>
</dbReference>
<dbReference type="InterPro" id="IPR035901">
    <property type="entry name" value="GIY-YIG_endonuc_sf"/>
</dbReference>
<dbReference type="InterPro" id="IPR047296">
    <property type="entry name" value="GIY-YIG_UvrC_Cho"/>
</dbReference>
<dbReference type="InterPro" id="IPR003583">
    <property type="entry name" value="Hlx-hairpin-Hlx_DNA-bd_motif"/>
</dbReference>
<dbReference type="InterPro" id="IPR010994">
    <property type="entry name" value="RuvA_2-like"/>
</dbReference>
<dbReference type="InterPro" id="IPR001943">
    <property type="entry name" value="UVR_dom"/>
</dbReference>
<dbReference type="InterPro" id="IPR036876">
    <property type="entry name" value="UVR_dom_sf"/>
</dbReference>
<dbReference type="InterPro" id="IPR050066">
    <property type="entry name" value="UvrABC_protein_C"/>
</dbReference>
<dbReference type="InterPro" id="IPR004791">
    <property type="entry name" value="UvrC"/>
</dbReference>
<dbReference type="InterPro" id="IPR001162">
    <property type="entry name" value="UvrC_RNase_H_dom"/>
</dbReference>
<dbReference type="InterPro" id="IPR038476">
    <property type="entry name" value="UvrC_RNase_H_dom_sf"/>
</dbReference>
<dbReference type="NCBIfam" id="TIGR00194">
    <property type="entry name" value="uvrC"/>
    <property type="match status" value="1"/>
</dbReference>
<dbReference type="PANTHER" id="PTHR30562:SF1">
    <property type="entry name" value="UVRABC SYSTEM PROTEIN C"/>
    <property type="match status" value="1"/>
</dbReference>
<dbReference type="PANTHER" id="PTHR30562">
    <property type="entry name" value="UVRC/OXIDOREDUCTASE"/>
    <property type="match status" value="1"/>
</dbReference>
<dbReference type="Pfam" id="PF01541">
    <property type="entry name" value="GIY-YIG"/>
    <property type="match status" value="1"/>
</dbReference>
<dbReference type="Pfam" id="PF14520">
    <property type="entry name" value="HHH_5"/>
    <property type="match status" value="1"/>
</dbReference>
<dbReference type="Pfam" id="PF02151">
    <property type="entry name" value="UVR"/>
    <property type="match status" value="1"/>
</dbReference>
<dbReference type="Pfam" id="PF22920">
    <property type="entry name" value="UvrC_RNaseH"/>
    <property type="match status" value="1"/>
</dbReference>
<dbReference type="Pfam" id="PF08459">
    <property type="entry name" value="UvrC_RNaseH_dom"/>
    <property type="match status" value="1"/>
</dbReference>
<dbReference type="SMART" id="SM00465">
    <property type="entry name" value="GIYc"/>
    <property type="match status" value="1"/>
</dbReference>
<dbReference type="SMART" id="SM00278">
    <property type="entry name" value="HhH1"/>
    <property type="match status" value="2"/>
</dbReference>
<dbReference type="SUPFAM" id="SSF46600">
    <property type="entry name" value="C-terminal UvrC-binding domain of UvrB"/>
    <property type="match status" value="1"/>
</dbReference>
<dbReference type="SUPFAM" id="SSF82771">
    <property type="entry name" value="GIY-YIG endonuclease"/>
    <property type="match status" value="1"/>
</dbReference>
<dbReference type="SUPFAM" id="SSF47781">
    <property type="entry name" value="RuvA domain 2-like"/>
    <property type="match status" value="1"/>
</dbReference>
<dbReference type="PROSITE" id="PS50164">
    <property type="entry name" value="GIY_YIG"/>
    <property type="match status" value="1"/>
</dbReference>
<dbReference type="PROSITE" id="PS50151">
    <property type="entry name" value="UVR"/>
    <property type="match status" value="1"/>
</dbReference>
<dbReference type="PROSITE" id="PS50165">
    <property type="entry name" value="UVRC"/>
    <property type="match status" value="1"/>
</dbReference>
<sequence>MANFDIDDFLRNLTPCPGVYRMLDAKGKVLYVGKAKNLKRRIKSYFRNSKLAPKIHVLVKQICDIKITVTHTENEALILESNLIKALQPRYNVLLRDDKSYPYIFLSADDFPRLGFHRGVKQVSGQYFGPYPNIRSVWQTLKLLQRVFPVRQCEDNFYRNRSRPCLQYQIKRCTAPCVGLISKKDYSQDIQHVVMFLKGRDQQVINELVIRMEEASGQLAFEQAAYYRDRIASLRQIQARQYISGEKKDIDVLGVALTEKMACVEVFFIRGGHNLGNKTFLPKLEGNLTPEELLSTFIAQYYLNRETPPILILSHQPKDMGLLTEVLSKQAGRKIALIKPVRGPKVQWIKMALANAKINLNQHLAEKSNITARFKSLQQLLSLANFPQRIECFDVSHIQGTATVASCVVFDREGPRKADYRRFNITGIIPGDDYGALRQALMRRFKKKEGVFPDLLVIDGGKGQINQSLRVLKEIGITEITVLGIAKGPERKAGNETLFLAGYENPVMVTSDSPALHILQHIRDEAHRFAIVSHRKRRAKGGKLSLLEGISGLGPKRRRKLLIQLGGLQEITRAGVEDLAQIEGISLELAQRIYDVFHR</sequence>
<keyword id="KW-0963">Cytoplasm</keyword>
<keyword id="KW-0227">DNA damage</keyword>
<keyword id="KW-0228">DNA excision</keyword>
<keyword id="KW-0234">DNA repair</keyword>
<keyword id="KW-0267">Excision nuclease</keyword>
<keyword id="KW-1185">Reference proteome</keyword>
<keyword id="KW-0742">SOS response</keyword>
<feature type="chain" id="PRO_0000227450" description="UvrABC system protein C">
    <location>
        <begin position="1"/>
        <end position="599"/>
    </location>
</feature>
<feature type="domain" description="GIY-YIG" evidence="1">
    <location>
        <begin position="15"/>
        <end position="93"/>
    </location>
</feature>
<feature type="domain" description="UVR" evidence="1">
    <location>
        <begin position="202"/>
        <end position="237"/>
    </location>
</feature>
<gene>
    <name evidence="1" type="primary">uvrC</name>
    <name type="ordered locus">Noc_1644</name>
</gene>
<reference key="1">
    <citation type="journal article" date="2006" name="Appl. Environ. Microbiol.">
        <title>Complete genome sequence of the marine, chemolithoautotrophic, ammonia-oxidizing bacterium Nitrosococcus oceani ATCC 19707.</title>
        <authorList>
            <person name="Klotz M.G."/>
            <person name="Arp D.J."/>
            <person name="Chain P.S.G."/>
            <person name="El-Sheikh A.F."/>
            <person name="Hauser L.J."/>
            <person name="Hommes N.G."/>
            <person name="Larimer F.W."/>
            <person name="Malfatti S.A."/>
            <person name="Norton J.M."/>
            <person name="Poret-Peterson A.T."/>
            <person name="Vergez L.M."/>
            <person name="Ward B.B."/>
        </authorList>
    </citation>
    <scope>NUCLEOTIDE SEQUENCE [LARGE SCALE GENOMIC DNA]</scope>
    <source>
        <strain>ATCC 19707 / BCRC 17464 / JCM 30415 / NCIMB 11848 / C-107</strain>
    </source>
</reference>
<comment type="function">
    <text evidence="1">The UvrABC repair system catalyzes the recognition and processing of DNA lesions. UvrC both incises the 5' and 3' sides of the lesion. The N-terminal half is responsible for the 3' incision and the C-terminal half is responsible for the 5' incision.</text>
</comment>
<comment type="subunit">
    <text evidence="1">Interacts with UvrB in an incision complex.</text>
</comment>
<comment type="subcellular location">
    <subcellularLocation>
        <location evidence="1">Cytoplasm</location>
    </subcellularLocation>
</comment>
<comment type="similarity">
    <text evidence="1">Belongs to the UvrC family.</text>
</comment>
<organism>
    <name type="scientific">Nitrosococcus oceani (strain ATCC 19707 / BCRC 17464 / JCM 30415 / NCIMB 11848 / C-107)</name>
    <dbReference type="NCBI Taxonomy" id="323261"/>
    <lineage>
        <taxon>Bacteria</taxon>
        <taxon>Pseudomonadati</taxon>
        <taxon>Pseudomonadota</taxon>
        <taxon>Gammaproteobacteria</taxon>
        <taxon>Chromatiales</taxon>
        <taxon>Chromatiaceae</taxon>
        <taxon>Nitrosococcus</taxon>
    </lineage>
</organism>
<name>UVRC_NITOC</name>
<accession>Q3JAN0</accession>
<proteinExistence type="inferred from homology"/>
<protein>
    <recommendedName>
        <fullName evidence="1">UvrABC system protein C</fullName>
        <shortName evidence="1">Protein UvrC</shortName>
    </recommendedName>
    <alternativeName>
        <fullName evidence="1">Excinuclease ABC subunit C</fullName>
    </alternativeName>
</protein>
<evidence type="ECO:0000255" key="1">
    <source>
        <dbReference type="HAMAP-Rule" id="MF_00203"/>
    </source>
</evidence>